<organism>
    <name type="scientific">Drosophila melanogaster</name>
    <name type="common">Fruit fly</name>
    <dbReference type="NCBI Taxonomy" id="7227"/>
    <lineage>
        <taxon>Eukaryota</taxon>
        <taxon>Metazoa</taxon>
        <taxon>Ecdysozoa</taxon>
        <taxon>Arthropoda</taxon>
        <taxon>Hexapoda</taxon>
        <taxon>Insecta</taxon>
        <taxon>Pterygota</taxon>
        <taxon>Neoptera</taxon>
        <taxon>Endopterygota</taxon>
        <taxon>Diptera</taxon>
        <taxon>Brachycera</taxon>
        <taxon>Muscomorpha</taxon>
        <taxon>Ephydroidea</taxon>
        <taxon>Drosophilidae</taxon>
        <taxon>Drosophila</taxon>
        <taxon>Sophophora</taxon>
    </lineage>
</organism>
<comment type="catalytic activity">
    <reaction>
        <text>L-seryl-[protein] + ATP = O-phospho-L-seryl-[protein] + ADP + H(+)</text>
        <dbReference type="Rhea" id="RHEA:17989"/>
        <dbReference type="Rhea" id="RHEA-COMP:9863"/>
        <dbReference type="Rhea" id="RHEA-COMP:11604"/>
        <dbReference type="ChEBI" id="CHEBI:15378"/>
        <dbReference type="ChEBI" id="CHEBI:29999"/>
        <dbReference type="ChEBI" id="CHEBI:30616"/>
        <dbReference type="ChEBI" id="CHEBI:83421"/>
        <dbReference type="ChEBI" id="CHEBI:456216"/>
        <dbReference type="EC" id="2.7.11.12"/>
    </reaction>
</comment>
<comment type="catalytic activity">
    <reaction>
        <text>L-threonyl-[protein] + ATP = O-phospho-L-threonyl-[protein] + ADP + H(+)</text>
        <dbReference type="Rhea" id="RHEA:46608"/>
        <dbReference type="Rhea" id="RHEA-COMP:11060"/>
        <dbReference type="Rhea" id="RHEA-COMP:11605"/>
        <dbReference type="ChEBI" id="CHEBI:15378"/>
        <dbReference type="ChEBI" id="CHEBI:30013"/>
        <dbReference type="ChEBI" id="CHEBI:30616"/>
        <dbReference type="ChEBI" id="CHEBI:61977"/>
        <dbReference type="ChEBI" id="CHEBI:456216"/>
        <dbReference type="EC" id="2.7.11.12"/>
    </reaction>
</comment>
<comment type="cofactor">
    <cofactor>
        <name>Mg(2+)</name>
        <dbReference type="ChEBI" id="CHEBI:18420"/>
    </cofactor>
</comment>
<comment type="activity regulation">
    <text>Binding of cGMP results in enzyme activation.</text>
</comment>
<comment type="subunit">
    <text evidence="8">Homodimer.</text>
</comment>
<comment type="tissue specificity">
    <text evidence="8">In embryo stage 13, expression is seen in a few large, irregular cells having the appearance of hemocytes or macrophages. In adults, expression is seen in optic lamina and weakly in testis.</text>
</comment>
<comment type="developmental stage">
    <text evidence="7 8">Highest expression is in embryos, low level expression is seen through rest of development.</text>
</comment>
<comment type="PTM">
    <text>Autophosphorylated.</text>
</comment>
<comment type="miscellaneous">
    <text evidence="1">cGMP-dependent protein kinase 1 consists of 3 types of domains: the regulatory domain, two cGMP-binding regions and the catalytic domain.</text>
</comment>
<comment type="similarity">
    <text evidence="9">Belongs to the protein kinase superfamily. AGC Ser/Thr protein kinase family. cGMP subfamily.</text>
</comment>
<accession>Q03042</accession>
<accession>Q24566</accession>
<accession>Q9V403</accession>
<sequence>MAAGMLTDREREAIVSNLTKDVQALREMVRSRESELVKLHREIHKLKSVLQQTTNNLNVTRNEKAKKKLYSLPEQCGEQESRNQNPHLCSSCGMVLPTSPEFALEALSLGPLSPLASTSSASPSGRTSADEVRPKAMPAAIKKQGVSAESCVQSMQQSYSIPIPKYEKDFSDKQQIKDAIMDNDFLKNIDASQVRELVDSMYSKSIAAGEFVIREGEVGAHLYVSAAGEFAVMQQGKVLDKMGAGKAFGELAILYNCTRTASIRVLSEAARVWVLDRRVFQQIMMCTGLQRIENSVNFLRSVPLLMNLSEELLAKIADVLELEFYAAGTYIIRQGTAGDSFFLISQGNVRVTQKLTPTSPEETELRTLSRGDYFGEQALINEDKRTANIIALSPGVECLTLDRDSFKRLIGDLCELKEKDYGDESRKLAMKQAQESCRDEPKEQLQQEFPDLKLTDLEVVSTLGIGGFGRVELVKAHHQDRVDIFALKCLKKRHIVDTKQEEHIFSERHIMLSSRSPFICRLYRTFRDEKYVYMLLEACMGGEIWTMLRDRGSFEDNAAQFIIGCVLQAFEYLHARGIIYRDLKPENLMLDERGYVKIVDFGFAKQIGTSSKTWTFCGTPEYVAPEIILNKGHDRAVDYWALGILIHELLNGTPPFSAPDPMQTYNLILKGIDMIAFPKHISRWAVQLIKRLCRDVPSERLGYQTGGIQDIKKHKWFLGFDWDGLASQLLIPPFVRPIAHPTDVRYFDRFPCDLNEPPDELSGWDADF</sequence>
<reference key="1">
    <citation type="journal article" date="1989" name="J. Biol. Chem.">
        <title>cGMP-dependent protein kinase genes in Drosophila.</title>
        <authorList>
            <person name="Kalderon D."/>
            <person name="Rubin G.M."/>
        </authorList>
    </citation>
    <scope>NUCLEOTIDE SEQUENCE [GENOMIC DNA]</scope>
    <scope>DEVELOPMENTAL STAGE</scope>
    <source>
        <tissue>Larva</tissue>
    </source>
</reference>
<reference key="2">
    <citation type="journal article" date="1996" name="J. Biol. Chem.">
        <title>Biochemical properties and cellular localization of the Drosophila DG1 cGMP-dependent protein kinase.</title>
        <authorList>
            <person name="Foster J.L."/>
            <person name="Higgins G.C."/>
            <person name="Jackson F.R."/>
        </authorList>
    </citation>
    <scope>NUCLEOTIDE SEQUENCE [MRNA]</scope>
    <scope>FUNCTION</scope>
    <scope>SUBUNIT</scope>
    <scope>AUTOPHOSPHORYLATION</scope>
    <scope>TISSUE SPECIFICITY</scope>
    <scope>DEVELOPMENTAL STAGE</scope>
</reference>
<reference key="3">
    <citation type="journal article" date="2000" name="Science">
        <title>The genome sequence of Drosophila melanogaster.</title>
        <authorList>
            <person name="Adams M.D."/>
            <person name="Celniker S.E."/>
            <person name="Holt R.A."/>
            <person name="Evans C.A."/>
            <person name="Gocayne J.D."/>
            <person name="Amanatides P.G."/>
            <person name="Scherer S.E."/>
            <person name="Li P.W."/>
            <person name="Hoskins R.A."/>
            <person name="Galle R.F."/>
            <person name="George R.A."/>
            <person name="Lewis S.E."/>
            <person name="Richards S."/>
            <person name="Ashburner M."/>
            <person name="Henderson S.N."/>
            <person name="Sutton G.G."/>
            <person name="Wortman J.R."/>
            <person name="Yandell M.D."/>
            <person name="Zhang Q."/>
            <person name="Chen L.X."/>
            <person name="Brandon R.C."/>
            <person name="Rogers Y.-H.C."/>
            <person name="Blazej R.G."/>
            <person name="Champe M."/>
            <person name="Pfeiffer B.D."/>
            <person name="Wan K.H."/>
            <person name="Doyle C."/>
            <person name="Baxter E.G."/>
            <person name="Helt G."/>
            <person name="Nelson C.R."/>
            <person name="Miklos G.L.G."/>
            <person name="Abril J.F."/>
            <person name="Agbayani A."/>
            <person name="An H.-J."/>
            <person name="Andrews-Pfannkoch C."/>
            <person name="Baldwin D."/>
            <person name="Ballew R.M."/>
            <person name="Basu A."/>
            <person name="Baxendale J."/>
            <person name="Bayraktaroglu L."/>
            <person name="Beasley E.M."/>
            <person name="Beeson K.Y."/>
            <person name="Benos P.V."/>
            <person name="Berman B.P."/>
            <person name="Bhandari D."/>
            <person name="Bolshakov S."/>
            <person name="Borkova D."/>
            <person name="Botchan M.R."/>
            <person name="Bouck J."/>
            <person name="Brokstein P."/>
            <person name="Brottier P."/>
            <person name="Burtis K.C."/>
            <person name="Busam D.A."/>
            <person name="Butler H."/>
            <person name="Cadieu E."/>
            <person name="Center A."/>
            <person name="Chandra I."/>
            <person name="Cherry J.M."/>
            <person name="Cawley S."/>
            <person name="Dahlke C."/>
            <person name="Davenport L.B."/>
            <person name="Davies P."/>
            <person name="de Pablos B."/>
            <person name="Delcher A."/>
            <person name="Deng Z."/>
            <person name="Mays A.D."/>
            <person name="Dew I."/>
            <person name="Dietz S.M."/>
            <person name="Dodson K."/>
            <person name="Doup L.E."/>
            <person name="Downes M."/>
            <person name="Dugan-Rocha S."/>
            <person name="Dunkov B.C."/>
            <person name="Dunn P."/>
            <person name="Durbin K.J."/>
            <person name="Evangelista C.C."/>
            <person name="Ferraz C."/>
            <person name="Ferriera S."/>
            <person name="Fleischmann W."/>
            <person name="Fosler C."/>
            <person name="Gabrielian A.E."/>
            <person name="Garg N.S."/>
            <person name="Gelbart W.M."/>
            <person name="Glasser K."/>
            <person name="Glodek A."/>
            <person name="Gong F."/>
            <person name="Gorrell J.H."/>
            <person name="Gu Z."/>
            <person name="Guan P."/>
            <person name="Harris M."/>
            <person name="Harris N.L."/>
            <person name="Harvey D.A."/>
            <person name="Heiman T.J."/>
            <person name="Hernandez J.R."/>
            <person name="Houck J."/>
            <person name="Hostin D."/>
            <person name="Houston K.A."/>
            <person name="Howland T.J."/>
            <person name="Wei M.-H."/>
            <person name="Ibegwam C."/>
            <person name="Jalali M."/>
            <person name="Kalush F."/>
            <person name="Karpen G.H."/>
            <person name="Ke Z."/>
            <person name="Kennison J.A."/>
            <person name="Ketchum K.A."/>
            <person name="Kimmel B.E."/>
            <person name="Kodira C.D."/>
            <person name="Kraft C.L."/>
            <person name="Kravitz S."/>
            <person name="Kulp D."/>
            <person name="Lai Z."/>
            <person name="Lasko P."/>
            <person name="Lei Y."/>
            <person name="Levitsky A.A."/>
            <person name="Li J.H."/>
            <person name="Li Z."/>
            <person name="Liang Y."/>
            <person name="Lin X."/>
            <person name="Liu X."/>
            <person name="Mattei B."/>
            <person name="McIntosh T.C."/>
            <person name="McLeod M.P."/>
            <person name="McPherson D."/>
            <person name="Merkulov G."/>
            <person name="Milshina N.V."/>
            <person name="Mobarry C."/>
            <person name="Morris J."/>
            <person name="Moshrefi A."/>
            <person name="Mount S.M."/>
            <person name="Moy M."/>
            <person name="Murphy B."/>
            <person name="Murphy L."/>
            <person name="Muzny D.M."/>
            <person name="Nelson D.L."/>
            <person name="Nelson D.R."/>
            <person name="Nelson K.A."/>
            <person name="Nixon K."/>
            <person name="Nusskern D.R."/>
            <person name="Pacleb J.M."/>
            <person name="Palazzolo M."/>
            <person name="Pittman G.S."/>
            <person name="Pan S."/>
            <person name="Pollard J."/>
            <person name="Puri V."/>
            <person name="Reese M.G."/>
            <person name="Reinert K."/>
            <person name="Remington K."/>
            <person name="Saunders R.D.C."/>
            <person name="Scheeler F."/>
            <person name="Shen H."/>
            <person name="Shue B.C."/>
            <person name="Siden-Kiamos I."/>
            <person name="Simpson M."/>
            <person name="Skupski M.P."/>
            <person name="Smith T.J."/>
            <person name="Spier E."/>
            <person name="Spradling A.C."/>
            <person name="Stapleton M."/>
            <person name="Strong R."/>
            <person name="Sun E."/>
            <person name="Svirskas R."/>
            <person name="Tector C."/>
            <person name="Turner R."/>
            <person name="Venter E."/>
            <person name="Wang A.H."/>
            <person name="Wang X."/>
            <person name="Wang Z.-Y."/>
            <person name="Wassarman D.A."/>
            <person name="Weinstock G.M."/>
            <person name="Weissenbach J."/>
            <person name="Williams S.M."/>
            <person name="Woodage T."/>
            <person name="Worley K.C."/>
            <person name="Wu D."/>
            <person name="Yang S."/>
            <person name="Yao Q.A."/>
            <person name="Ye J."/>
            <person name="Yeh R.-F."/>
            <person name="Zaveri J.S."/>
            <person name="Zhan M."/>
            <person name="Zhang G."/>
            <person name="Zhao Q."/>
            <person name="Zheng L."/>
            <person name="Zheng X.H."/>
            <person name="Zhong F.N."/>
            <person name="Zhong W."/>
            <person name="Zhou X."/>
            <person name="Zhu S.C."/>
            <person name="Zhu X."/>
            <person name="Smith H.O."/>
            <person name="Gibbs R.A."/>
            <person name="Myers E.W."/>
            <person name="Rubin G.M."/>
            <person name="Venter J.C."/>
        </authorList>
    </citation>
    <scope>NUCLEOTIDE SEQUENCE [LARGE SCALE GENOMIC DNA]</scope>
    <source>
        <strain>Berkeley</strain>
    </source>
</reference>
<reference key="4">
    <citation type="journal article" date="2002" name="Genome Biol.">
        <title>Annotation of the Drosophila melanogaster euchromatic genome: a systematic review.</title>
        <authorList>
            <person name="Misra S."/>
            <person name="Crosby M.A."/>
            <person name="Mungall C.J."/>
            <person name="Matthews B.B."/>
            <person name="Campbell K.S."/>
            <person name="Hradecky P."/>
            <person name="Huang Y."/>
            <person name="Kaminker J.S."/>
            <person name="Millburn G.H."/>
            <person name="Prochnik S.E."/>
            <person name="Smith C.D."/>
            <person name="Tupy J.L."/>
            <person name="Whitfield E.J."/>
            <person name="Bayraktaroglu L."/>
            <person name="Berman B.P."/>
            <person name="Bettencourt B.R."/>
            <person name="Celniker S.E."/>
            <person name="de Grey A.D.N.J."/>
            <person name="Drysdale R.A."/>
            <person name="Harris N.L."/>
            <person name="Richter J."/>
            <person name="Russo S."/>
            <person name="Schroeder A.J."/>
            <person name="Shu S.Q."/>
            <person name="Stapleton M."/>
            <person name="Yamada C."/>
            <person name="Ashburner M."/>
            <person name="Gelbart W.M."/>
            <person name="Rubin G.M."/>
            <person name="Lewis S.E."/>
        </authorList>
    </citation>
    <scope>GENOME REANNOTATION</scope>
    <source>
        <strain>Berkeley</strain>
    </source>
</reference>
<reference key="5">
    <citation type="journal article" date="2002" name="Genome Biol.">
        <title>A Drosophila full-length cDNA resource.</title>
        <authorList>
            <person name="Stapleton M."/>
            <person name="Carlson J.W."/>
            <person name="Brokstein P."/>
            <person name="Yu C."/>
            <person name="Champe M."/>
            <person name="George R.A."/>
            <person name="Guarin H."/>
            <person name="Kronmiller B."/>
            <person name="Pacleb J.M."/>
            <person name="Park S."/>
            <person name="Wan K.H."/>
            <person name="Rubin G.M."/>
            <person name="Celniker S.E."/>
        </authorList>
    </citation>
    <scope>NUCLEOTIDE SEQUENCE [LARGE SCALE MRNA]</scope>
    <source>
        <strain>Berkeley</strain>
        <tissue>Head</tissue>
    </source>
</reference>
<reference key="6">
    <citation type="journal article" date="1988" name="J. Biol. Chem.">
        <title>Cloning, sequence, and expression of the Drosophila cAMP-dependent protein kinase catalytic subunit gene.</title>
        <authorList>
            <person name="Foster J.L."/>
            <person name="Higgins G.C."/>
            <person name="Jackson R.F."/>
        </authorList>
    </citation>
    <scope>NUCLEOTIDE SEQUENCE OF 172-644</scope>
</reference>
<proteinExistence type="evidence at protein level"/>
<keyword id="KW-0067">ATP-binding</keyword>
<keyword id="KW-0140">cGMP</keyword>
<keyword id="KW-0142">cGMP-binding</keyword>
<keyword id="KW-0418">Kinase</keyword>
<keyword id="KW-0547">Nucleotide-binding</keyword>
<keyword id="KW-0597">Phosphoprotein</keyword>
<keyword id="KW-1185">Reference proteome</keyword>
<keyword id="KW-0723">Serine/threonine-protein kinase</keyword>
<keyword id="KW-0808">Transferase</keyword>
<gene>
    <name type="primary">Pkg21D</name>
    <name type="synonym">DG1</name>
    <name type="ORF">CG3324</name>
</gene>
<feature type="chain" id="PRO_0000086120" description="cGMP-dependent protein kinase, isozyme 1">
    <location>
        <begin position="1"/>
        <end position="768"/>
    </location>
</feature>
<feature type="domain" description="Protein kinase" evidence="3">
    <location>
        <begin position="457"/>
        <end position="717"/>
    </location>
</feature>
<feature type="domain" description="AGC-kinase C-terminal" evidence="4">
    <location>
        <begin position="718"/>
        <end position="768"/>
    </location>
</feature>
<feature type="region of interest" description="Regulatory" evidence="1">
    <location>
        <begin position="1"/>
        <end position="192"/>
    </location>
</feature>
<feature type="region of interest" description="Disordered" evidence="6">
    <location>
        <begin position="114"/>
        <end position="134"/>
    </location>
</feature>
<feature type="compositionally biased region" description="Low complexity" evidence="6">
    <location>
        <begin position="114"/>
        <end position="127"/>
    </location>
</feature>
<feature type="active site" description="Proton acceptor" evidence="3 5">
    <location>
        <position position="582"/>
    </location>
</feature>
<feature type="binding site" evidence="2">
    <location>
        <begin position="249"/>
        <end position="252"/>
    </location>
    <ligand>
        <name>3',5'-cyclic GMP</name>
        <dbReference type="ChEBI" id="CHEBI:57746"/>
        <label>1</label>
    </ligand>
</feature>
<feature type="binding site" evidence="2">
    <location>
        <begin position="259"/>
        <end position="260"/>
    </location>
    <ligand>
        <name>3',5'-cyclic GMP</name>
        <dbReference type="ChEBI" id="CHEBI:57746"/>
        <label>1</label>
    </ligand>
</feature>
<feature type="binding site" evidence="2">
    <location>
        <position position="366"/>
    </location>
    <ligand>
        <name>3',5'-cyclic GMP</name>
        <dbReference type="ChEBI" id="CHEBI:57746"/>
        <label>2</label>
    </ligand>
</feature>
<feature type="binding site" evidence="2">
    <location>
        <begin position="375"/>
        <end position="378"/>
    </location>
    <ligand>
        <name>3',5'-cyclic GMP</name>
        <dbReference type="ChEBI" id="CHEBI:57746"/>
        <label>2</label>
    </ligand>
</feature>
<feature type="binding site" evidence="2">
    <location>
        <begin position="385"/>
        <end position="386"/>
    </location>
    <ligand>
        <name>3',5'-cyclic GMP</name>
        <dbReference type="ChEBI" id="CHEBI:57746"/>
        <label>2</label>
    </ligand>
</feature>
<feature type="binding site" evidence="2">
    <location>
        <position position="421"/>
    </location>
    <ligand>
        <name>3',5'-cyclic GMP</name>
        <dbReference type="ChEBI" id="CHEBI:57746"/>
        <label>2</label>
    </ligand>
</feature>
<feature type="binding site" evidence="3">
    <location>
        <begin position="463"/>
        <end position="471"/>
    </location>
    <ligand>
        <name>ATP</name>
        <dbReference type="ChEBI" id="CHEBI:30616"/>
    </ligand>
</feature>
<feature type="binding site" evidence="3">
    <location>
        <position position="488"/>
    </location>
    <ligand>
        <name>ATP</name>
        <dbReference type="ChEBI" id="CHEBI:30616"/>
    </ligand>
</feature>
<feature type="sequence conflict" description="In Ref. 2; AAB03405." evidence="9" ref="2">
    <original>Q</original>
    <variation>H</variation>
    <location>
        <position position="235"/>
    </location>
</feature>
<feature type="sequence conflict" description="In Ref. 2; AAB03405." evidence="9" ref="2">
    <original>Q</original>
    <variation>R</variation>
    <location>
        <position position="434"/>
    </location>
</feature>
<feature type="sequence conflict" description="In Ref. 2; AAB03405." evidence="9" ref="2">
    <original>R</original>
    <variation>Q</variation>
    <location>
        <position position="438"/>
    </location>
</feature>
<dbReference type="EC" id="2.7.11.12"/>
<dbReference type="EMBL" id="M27114">
    <property type="protein sequence ID" value="AAA28453.1"/>
    <property type="molecule type" value="Genomic_DNA"/>
</dbReference>
<dbReference type="EMBL" id="M27113">
    <property type="protein sequence ID" value="AAA28453.1"/>
    <property type="status" value="JOINED"/>
    <property type="molecule type" value="Genomic_DNA"/>
</dbReference>
<dbReference type="EMBL" id="U59901">
    <property type="protein sequence ID" value="AAB03405.1"/>
    <property type="molecule type" value="mRNA"/>
</dbReference>
<dbReference type="EMBL" id="AE014134">
    <property type="protein sequence ID" value="AAF51459.1"/>
    <property type="molecule type" value="Genomic_DNA"/>
</dbReference>
<dbReference type="EMBL" id="AY058288">
    <property type="protein sequence ID" value="AAL13517.1"/>
    <property type="molecule type" value="mRNA"/>
</dbReference>
<dbReference type="PIR" id="A34106">
    <property type="entry name" value="A34106"/>
</dbReference>
<dbReference type="RefSeq" id="NP_477213.1">
    <property type="nucleotide sequence ID" value="NM_057865.4"/>
</dbReference>
<dbReference type="SMR" id="Q03042"/>
<dbReference type="FunCoup" id="Q03042">
    <property type="interactions" value="74"/>
</dbReference>
<dbReference type="IntAct" id="Q03042">
    <property type="interactions" value="2"/>
</dbReference>
<dbReference type="STRING" id="7227.FBpp0077706"/>
<dbReference type="PaxDb" id="7227-FBpp0077706"/>
<dbReference type="EnsemblMetazoa" id="FBtr0078042">
    <property type="protein sequence ID" value="FBpp0077706"/>
    <property type="gene ID" value="FBgn0000442"/>
</dbReference>
<dbReference type="GeneID" id="33253"/>
<dbReference type="KEGG" id="dme:Dmel_CG3324"/>
<dbReference type="AGR" id="FB:FBgn0000442"/>
<dbReference type="CTD" id="33253"/>
<dbReference type="FlyBase" id="FBgn0000442">
    <property type="gene designation" value="Pkg21D"/>
</dbReference>
<dbReference type="VEuPathDB" id="VectorBase:FBgn0000442"/>
<dbReference type="eggNOG" id="KOG0614">
    <property type="taxonomic scope" value="Eukaryota"/>
</dbReference>
<dbReference type="GeneTree" id="ENSGT00940000166710"/>
<dbReference type="HOGENOM" id="CLU_000288_73_2_1"/>
<dbReference type="InParanoid" id="Q03042"/>
<dbReference type="OMA" id="CDLNEPP"/>
<dbReference type="OrthoDB" id="63267at2759"/>
<dbReference type="PhylomeDB" id="Q03042"/>
<dbReference type="BRENDA" id="2.7.11.12">
    <property type="organism ID" value="1994"/>
</dbReference>
<dbReference type="Reactome" id="R-DME-1474151">
    <property type="pathway name" value="Tetrahydrobiopterin (BH4) synthesis, recycling, salvage and regulation"/>
</dbReference>
<dbReference type="Reactome" id="R-DME-9648002">
    <property type="pathway name" value="RAS processing"/>
</dbReference>
<dbReference type="BioGRID-ORCS" id="33253">
    <property type="hits" value="0 hits in 3 CRISPR screens"/>
</dbReference>
<dbReference type="GenomeRNAi" id="33253"/>
<dbReference type="PRO" id="PR:Q03042"/>
<dbReference type="Proteomes" id="UP000000803">
    <property type="component" value="Chromosome 2L"/>
</dbReference>
<dbReference type="Bgee" id="FBgn0000442">
    <property type="expression patterns" value="Expressed in adult Malpighian tubule (Drosophila) and 25 other cell types or tissues"/>
</dbReference>
<dbReference type="GO" id="GO:0005737">
    <property type="term" value="C:cytoplasm"/>
    <property type="evidence" value="ECO:0000314"/>
    <property type="project" value="FlyBase"/>
</dbReference>
<dbReference type="GO" id="GO:0005524">
    <property type="term" value="F:ATP binding"/>
    <property type="evidence" value="ECO:0007669"/>
    <property type="project" value="UniProtKB-KW"/>
</dbReference>
<dbReference type="GO" id="GO:0030553">
    <property type="term" value="F:cGMP binding"/>
    <property type="evidence" value="ECO:0007669"/>
    <property type="project" value="UniProtKB-KW"/>
</dbReference>
<dbReference type="GO" id="GO:0004692">
    <property type="term" value="F:cGMP-dependent protein kinase activity"/>
    <property type="evidence" value="ECO:0000314"/>
    <property type="project" value="FlyBase"/>
</dbReference>
<dbReference type="GO" id="GO:0106310">
    <property type="term" value="F:protein serine kinase activity"/>
    <property type="evidence" value="ECO:0007669"/>
    <property type="project" value="RHEA"/>
</dbReference>
<dbReference type="GO" id="GO:0007526">
    <property type="term" value="P:larval somatic muscle development"/>
    <property type="evidence" value="ECO:0000315"/>
    <property type="project" value="FlyBase"/>
</dbReference>
<dbReference type="GO" id="GO:0007165">
    <property type="term" value="P:signal transduction"/>
    <property type="evidence" value="ECO:0000318"/>
    <property type="project" value="GO_Central"/>
</dbReference>
<dbReference type="CDD" id="cd00038">
    <property type="entry name" value="CAP_ED"/>
    <property type="match status" value="2"/>
</dbReference>
<dbReference type="CDD" id="cd05572">
    <property type="entry name" value="STKc_cGK"/>
    <property type="match status" value="1"/>
</dbReference>
<dbReference type="FunFam" id="1.10.510.10:FF:000096">
    <property type="entry name" value="cGMP-dependent protein kinase"/>
    <property type="match status" value="1"/>
</dbReference>
<dbReference type="FunFam" id="2.60.120.10:FF:000072">
    <property type="entry name" value="cGMP-dependent protein kinase"/>
    <property type="match status" value="1"/>
</dbReference>
<dbReference type="FunFam" id="2.60.120.10:FF:000064">
    <property type="entry name" value="cGMP-dependent protein kinase, isozyme"/>
    <property type="match status" value="1"/>
</dbReference>
<dbReference type="Gene3D" id="2.60.120.10">
    <property type="entry name" value="Jelly Rolls"/>
    <property type="match status" value="2"/>
</dbReference>
<dbReference type="Gene3D" id="3.30.200.20">
    <property type="entry name" value="Phosphorylase Kinase, domain 1"/>
    <property type="match status" value="1"/>
</dbReference>
<dbReference type="Gene3D" id="1.10.510.10">
    <property type="entry name" value="Transferase(Phosphotransferase) domain 1"/>
    <property type="match status" value="1"/>
</dbReference>
<dbReference type="InterPro" id="IPR000961">
    <property type="entry name" value="AGC-kinase_C"/>
</dbReference>
<dbReference type="InterPro" id="IPR002374">
    <property type="entry name" value="cGMP_dep_kinase"/>
</dbReference>
<dbReference type="InterPro" id="IPR018488">
    <property type="entry name" value="cNMP-bd_CS"/>
</dbReference>
<dbReference type="InterPro" id="IPR000595">
    <property type="entry name" value="cNMP-bd_dom"/>
</dbReference>
<dbReference type="InterPro" id="IPR018490">
    <property type="entry name" value="cNMP-bd_dom_sf"/>
</dbReference>
<dbReference type="InterPro" id="IPR011009">
    <property type="entry name" value="Kinase-like_dom_sf"/>
</dbReference>
<dbReference type="InterPro" id="IPR000719">
    <property type="entry name" value="Prot_kinase_dom"/>
</dbReference>
<dbReference type="InterPro" id="IPR017441">
    <property type="entry name" value="Protein_kinase_ATP_BS"/>
</dbReference>
<dbReference type="InterPro" id="IPR014710">
    <property type="entry name" value="RmlC-like_jellyroll"/>
</dbReference>
<dbReference type="InterPro" id="IPR008271">
    <property type="entry name" value="Ser/Thr_kinase_AS"/>
</dbReference>
<dbReference type="InterPro" id="IPR035014">
    <property type="entry name" value="STKc_cGK"/>
</dbReference>
<dbReference type="PANTHER" id="PTHR24353:SF147">
    <property type="entry name" value="CGMP-DEPENDENT SERINE_THREONIN PROTEIN KINASE-RELATED"/>
    <property type="match status" value="1"/>
</dbReference>
<dbReference type="PANTHER" id="PTHR24353">
    <property type="entry name" value="CYCLIC NUCLEOTIDE-DEPENDENT PROTEIN KINASE"/>
    <property type="match status" value="1"/>
</dbReference>
<dbReference type="Pfam" id="PF00027">
    <property type="entry name" value="cNMP_binding"/>
    <property type="match status" value="2"/>
</dbReference>
<dbReference type="Pfam" id="PF00069">
    <property type="entry name" value="Pkinase"/>
    <property type="match status" value="1"/>
</dbReference>
<dbReference type="PIRSF" id="PIRSF000559">
    <property type="entry name" value="cGMP-dep_kinase"/>
    <property type="match status" value="1"/>
</dbReference>
<dbReference type="PRINTS" id="PR00104">
    <property type="entry name" value="CGMPKINASE"/>
</dbReference>
<dbReference type="SMART" id="SM00100">
    <property type="entry name" value="cNMP"/>
    <property type="match status" value="2"/>
</dbReference>
<dbReference type="SMART" id="SM00133">
    <property type="entry name" value="S_TK_X"/>
    <property type="match status" value="1"/>
</dbReference>
<dbReference type="SMART" id="SM00220">
    <property type="entry name" value="S_TKc"/>
    <property type="match status" value="1"/>
</dbReference>
<dbReference type="SUPFAM" id="SSF51206">
    <property type="entry name" value="cAMP-binding domain-like"/>
    <property type="match status" value="2"/>
</dbReference>
<dbReference type="SUPFAM" id="SSF56112">
    <property type="entry name" value="Protein kinase-like (PK-like)"/>
    <property type="match status" value="1"/>
</dbReference>
<dbReference type="PROSITE" id="PS51285">
    <property type="entry name" value="AGC_KINASE_CTER"/>
    <property type="match status" value="1"/>
</dbReference>
<dbReference type="PROSITE" id="PS00888">
    <property type="entry name" value="CNMP_BINDING_1"/>
    <property type="match status" value="1"/>
</dbReference>
<dbReference type="PROSITE" id="PS00889">
    <property type="entry name" value="CNMP_BINDING_2"/>
    <property type="match status" value="2"/>
</dbReference>
<dbReference type="PROSITE" id="PS50042">
    <property type="entry name" value="CNMP_BINDING_3"/>
    <property type="match status" value="2"/>
</dbReference>
<dbReference type="PROSITE" id="PS00107">
    <property type="entry name" value="PROTEIN_KINASE_ATP"/>
    <property type="match status" value="1"/>
</dbReference>
<dbReference type="PROSITE" id="PS50011">
    <property type="entry name" value="PROTEIN_KINASE_DOM"/>
    <property type="match status" value="1"/>
</dbReference>
<dbReference type="PROSITE" id="PS00108">
    <property type="entry name" value="PROTEIN_KINASE_ST"/>
    <property type="match status" value="1"/>
</dbReference>
<evidence type="ECO:0000250" key="1"/>
<evidence type="ECO:0000250" key="2">
    <source>
        <dbReference type="UniProtKB" id="Q13976"/>
    </source>
</evidence>
<evidence type="ECO:0000255" key="3">
    <source>
        <dbReference type="PROSITE-ProRule" id="PRU00159"/>
    </source>
</evidence>
<evidence type="ECO:0000255" key="4">
    <source>
        <dbReference type="PROSITE-ProRule" id="PRU00618"/>
    </source>
</evidence>
<evidence type="ECO:0000255" key="5">
    <source>
        <dbReference type="PROSITE-ProRule" id="PRU10027"/>
    </source>
</evidence>
<evidence type="ECO:0000256" key="6">
    <source>
        <dbReference type="SAM" id="MobiDB-lite"/>
    </source>
</evidence>
<evidence type="ECO:0000269" key="7">
    <source>
    </source>
</evidence>
<evidence type="ECO:0000269" key="8">
    <source>
    </source>
</evidence>
<evidence type="ECO:0000305" key="9"/>
<protein>
    <recommendedName>
        <fullName>cGMP-dependent protein kinase, isozyme 1</fullName>
        <shortName>cGK</shortName>
        <ecNumber>2.7.11.12</ecNumber>
    </recommendedName>
</protein>
<name>KGP1_DROME</name>